<sequence>MAEITAALVKELRERTGEGMMDCKKALTKAGGDIEKAIDDMRASGAIKAAKKAGNVAAEGAIAIKDDGKAAVLLEVNSQTDFLALQDDFKAFVAASVEKAFADKLTDAAPLIEAQEAARLILVGKTGENVNIRRLARVEGDVVGTYLHGNKIGVAVVLKGGSVELAKDIAMHVAASNPEFLLPSQVSAEAIEREKAVFLQLNEDKMKGKPAEIVEKMIAGRISKFLAEASLVEQAFVKDPEITVGALAKKGGAEIVSFTRFAVGEGIEKKEDNFAEEVAAQLAAAKQQ</sequence>
<organism>
    <name type="scientific">Pseudomonas fluorescens (strain ATCC BAA-477 / NRRL B-23932 / Pf-5)</name>
    <dbReference type="NCBI Taxonomy" id="220664"/>
    <lineage>
        <taxon>Bacteria</taxon>
        <taxon>Pseudomonadati</taxon>
        <taxon>Pseudomonadota</taxon>
        <taxon>Gammaproteobacteria</taxon>
        <taxon>Pseudomonadales</taxon>
        <taxon>Pseudomonadaceae</taxon>
        <taxon>Pseudomonas</taxon>
    </lineage>
</organism>
<evidence type="ECO:0000255" key="1">
    <source>
        <dbReference type="HAMAP-Rule" id="MF_00050"/>
    </source>
</evidence>
<accession>Q4KHH5</accession>
<feature type="chain" id="PRO_0000241508" description="Elongation factor Ts">
    <location>
        <begin position="1"/>
        <end position="288"/>
    </location>
</feature>
<feature type="region of interest" description="Involved in Mg(2+) ion dislocation from EF-Tu" evidence="1">
    <location>
        <begin position="80"/>
        <end position="83"/>
    </location>
</feature>
<keyword id="KW-0963">Cytoplasm</keyword>
<keyword id="KW-0251">Elongation factor</keyword>
<keyword id="KW-0648">Protein biosynthesis</keyword>
<reference key="1">
    <citation type="journal article" date="2005" name="Nat. Biotechnol.">
        <title>Complete genome sequence of the plant commensal Pseudomonas fluorescens Pf-5.</title>
        <authorList>
            <person name="Paulsen I.T."/>
            <person name="Press C.M."/>
            <person name="Ravel J."/>
            <person name="Kobayashi D.Y."/>
            <person name="Myers G.S.A."/>
            <person name="Mavrodi D.V."/>
            <person name="DeBoy R.T."/>
            <person name="Seshadri R."/>
            <person name="Ren Q."/>
            <person name="Madupu R."/>
            <person name="Dodson R.J."/>
            <person name="Durkin A.S."/>
            <person name="Brinkac L.M."/>
            <person name="Daugherty S.C."/>
            <person name="Sullivan S.A."/>
            <person name="Rosovitz M.J."/>
            <person name="Gwinn M.L."/>
            <person name="Zhou L."/>
            <person name="Schneider D.J."/>
            <person name="Cartinhour S.W."/>
            <person name="Nelson W.C."/>
            <person name="Weidman J."/>
            <person name="Watkins K."/>
            <person name="Tran K."/>
            <person name="Khouri H."/>
            <person name="Pierson E.A."/>
            <person name="Pierson L.S. III"/>
            <person name="Thomashow L.S."/>
            <person name="Loper J.E."/>
        </authorList>
    </citation>
    <scope>NUCLEOTIDE SEQUENCE [LARGE SCALE GENOMIC DNA]</scope>
    <source>
        <strain>ATCC BAA-477 / NRRL B-23932 / Pf-5</strain>
    </source>
</reference>
<proteinExistence type="inferred from homology"/>
<name>EFTS_PSEF5</name>
<gene>
    <name evidence="1" type="primary">tsf</name>
    <name type="ordered locus">PFL_1177</name>
</gene>
<dbReference type="EMBL" id="CP000076">
    <property type="protein sequence ID" value="AAY90464.1"/>
    <property type="molecule type" value="Genomic_DNA"/>
</dbReference>
<dbReference type="RefSeq" id="WP_011059525.1">
    <property type="nucleotide sequence ID" value="NC_004129.6"/>
</dbReference>
<dbReference type="SMR" id="Q4KHH5"/>
<dbReference type="STRING" id="220664.PFL_1177"/>
<dbReference type="GeneID" id="57474181"/>
<dbReference type="KEGG" id="pfl:PFL_1177"/>
<dbReference type="PATRIC" id="fig|220664.5.peg.1209"/>
<dbReference type="eggNOG" id="COG0264">
    <property type="taxonomic scope" value="Bacteria"/>
</dbReference>
<dbReference type="HOGENOM" id="CLU_047155_0_0_6"/>
<dbReference type="Proteomes" id="UP000008540">
    <property type="component" value="Chromosome"/>
</dbReference>
<dbReference type="GO" id="GO:0005737">
    <property type="term" value="C:cytoplasm"/>
    <property type="evidence" value="ECO:0007669"/>
    <property type="project" value="UniProtKB-SubCell"/>
</dbReference>
<dbReference type="GO" id="GO:0003746">
    <property type="term" value="F:translation elongation factor activity"/>
    <property type="evidence" value="ECO:0007669"/>
    <property type="project" value="UniProtKB-UniRule"/>
</dbReference>
<dbReference type="CDD" id="cd14275">
    <property type="entry name" value="UBA_EF-Ts"/>
    <property type="match status" value="1"/>
</dbReference>
<dbReference type="FunFam" id="1.10.286.20:FF:000001">
    <property type="entry name" value="Elongation factor Ts"/>
    <property type="match status" value="1"/>
</dbReference>
<dbReference type="FunFam" id="1.10.8.10:FF:000001">
    <property type="entry name" value="Elongation factor Ts"/>
    <property type="match status" value="1"/>
</dbReference>
<dbReference type="Gene3D" id="1.10.286.20">
    <property type="match status" value="1"/>
</dbReference>
<dbReference type="Gene3D" id="1.10.8.10">
    <property type="entry name" value="DNA helicase RuvA subunit, C-terminal domain"/>
    <property type="match status" value="1"/>
</dbReference>
<dbReference type="Gene3D" id="3.30.479.20">
    <property type="entry name" value="Elongation factor Ts, dimerisation domain"/>
    <property type="match status" value="2"/>
</dbReference>
<dbReference type="HAMAP" id="MF_00050">
    <property type="entry name" value="EF_Ts"/>
    <property type="match status" value="1"/>
</dbReference>
<dbReference type="InterPro" id="IPR036402">
    <property type="entry name" value="EF-Ts_dimer_sf"/>
</dbReference>
<dbReference type="InterPro" id="IPR001816">
    <property type="entry name" value="Transl_elong_EFTs/EF1B"/>
</dbReference>
<dbReference type="InterPro" id="IPR014039">
    <property type="entry name" value="Transl_elong_EFTs/EF1B_dimer"/>
</dbReference>
<dbReference type="InterPro" id="IPR018101">
    <property type="entry name" value="Transl_elong_Ts_CS"/>
</dbReference>
<dbReference type="InterPro" id="IPR009060">
    <property type="entry name" value="UBA-like_sf"/>
</dbReference>
<dbReference type="NCBIfam" id="TIGR00116">
    <property type="entry name" value="tsf"/>
    <property type="match status" value="1"/>
</dbReference>
<dbReference type="PANTHER" id="PTHR11741">
    <property type="entry name" value="ELONGATION FACTOR TS"/>
    <property type="match status" value="1"/>
</dbReference>
<dbReference type="PANTHER" id="PTHR11741:SF0">
    <property type="entry name" value="ELONGATION FACTOR TS, MITOCHONDRIAL"/>
    <property type="match status" value="1"/>
</dbReference>
<dbReference type="Pfam" id="PF00889">
    <property type="entry name" value="EF_TS"/>
    <property type="match status" value="1"/>
</dbReference>
<dbReference type="SUPFAM" id="SSF54713">
    <property type="entry name" value="Elongation factor Ts (EF-Ts), dimerisation domain"/>
    <property type="match status" value="2"/>
</dbReference>
<dbReference type="SUPFAM" id="SSF46934">
    <property type="entry name" value="UBA-like"/>
    <property type="match status" value="1"/>
</dbReference>
<dbReference type="PROSITE" id="PS01126">
    <property type="entry name" value="EF_TS_1"/>
    <property type="match status" value="1"/>
</dbReference>
<dbReference type="PROSITE" id="PS01127">
    <property type="entry name" value="EF_TS_2"/>
    <property type="match status" value="1"/>
</dbReference>
<protein>
    <recommendedName>
        <fullName evidence="1">Elongation factor Ts</fullName>
        <shortName evidence="1">EF-Ts</shortName>
    </recommendedName>
</protein>
<comment type="function">
    <text evidence="1">Associates with the EF-Tu.GDP complex and induces the exchange of GDP to GTP. It remains bound to the aminoacyl-tRNA.EF-Tu.GTP complex up to the GTP hydrolysis stage on the ribosome.</text>
</comment>
<comment type="subcellular location">
    <subcellularLocation>
        <location evidence="1">Cytoplasm</location>
    </subcellularLocation>
</comment>
<comment type="similarity">
    <text evidence="1">Belongs to the EF-Ts family.</text>
</comment>